<proteinExistence type="inferred from homology"/>
<reference key="1">
    <citation type="journal article" date="2008" name="BMC Genomics">
        <title>Complete genome of Phenylobacterium zucineum - a novel facultative intracellular bacterium isolated from human erythroleukemia cell line K562.</title>
        <authorList>
            <person name="Luo Y."/>
            <person name="Xu X."/>
            <person name="Ding Z."/>
            <person name="Liu Z."/>
            <person name="Zhang B."/>
            <person name="Yan Z."/>
            <person name="Sun J."/>
            <person name="Hu S."/>
            <person name="Hu X."/>
        </authorList>
    </citation>
    <scope>NUCLEOTIDE SEQUENCE [LARGE SCALE GENOMIC DNA]</scope>
    <source>
        <strain>HLK1</strain>
    </source>
</reference>
<comment type="function">
    <text evidence="1">Could be involved in insertion of integral membrane proteins into the membrane.</text>
</comment>
<comment type="subcellular location">
    <subcellularLocation>
        <location evidence="1">Cell inner membrane</location>
        <topology evidence="1">Peripheral membrane protein</topology>
        <orientation evidence="1">Cytoplasmic side</orientation>
    </subcellularLocation>
</comment>
<comment type="similarity">
    <text evidence="1">Belongs to the UPF0161 family.</text>
</comment>
<feature type="chain" id="PRO_1000197769" description="Putative membrane protein insertion efficiency factor">
    <location>
        <begin position="1"/>
        <end position="85"/>
    </location>
</feature>
<dbReference type="EMBL" id="CP000747">
    <property type="protein sequence ID" value="ACG76836.1"/>
    <property type="molecule type" value="Genomic_DNA"/>
</dbReference>
<dbReference type="RefSeq" id="WP_012520984.1">
    <property type="nucleotide sequence ID" value="NC_011144.1"/>
</dbReference>
<dbReference type="STRING" id="450851.PHZ_c0422"/>
<dbReference type="KEGG" id="pzu:PHZ_c0422"/>
<dbReference type="eggNOG" id="COG0759">
    <property type="taxonomic scope" value="Bacteria"/>
</dbReference>
<dbReference type="HOGENOM" id="CLU_144811_0_0_5"/>
<dbReference type="OrthoDB" id="9801753at2"/>
<dbReference type="Proteomes" id="UP000001868">
    <property type="component" value="Chromosome"/>
</dbReference>
<dbReference type="GO" id="GO:0005886">
    <property type="term" value="C:plasma membrane"/>
    <property type="evidence" value="ECO:0007669"/>
    <property type="project" value="UniProtKB-SubCell"/>
</dbReference>
<dbReference type="HAMAP" id="MF_00386">
    <property type="entry name" value="UPF0161_YidD"/>
    <property type="match status" value="1"/>
</dbReference>
<dbReference type="InterPro" id="IPR002696">
    <property type="entry name" value="Membr_insert_effic_factor_YidD"/>
</dbReference>
<dbReference type="NCBIfam" id="TIGR00278">
    <property type="entry name" value="membrane protein insertion efficiency factor YidD"/>
    <property type="match status" value="1"/>
</dbReference>
<dbReference type="PANTHER" id="PTHR33383">
    <property type="entry name" value="MEMBRANE PROTEIN INSERTION EFFICIENCY FACTOR-RELATED"/>
    <property type="match status" value="1"/>
</dbReference>
<dbReference type="PANTHER" id="PTHR33383:SF1">
    <property type="entry name" value="MEMBRANE PROTEIN INSERTION EFFICIENCY FACTOR-RELATED"/>
    <property type="match status" value="1"/>
</dbReference>
<dbReference type="Pfam" id="PF01809">
    <property type="entry name" value="YidD"/>
    <property type="match status" value="1"/>
</dbReference>
<dbReference type="SMART" id="SM01234">
    <property type="entry name" value="Haemolytic"/>
    <property type="match status" value="1"/>
</dbReference>
<evidence type="ECO:0000255" key="1">
    <source>
        <dbReference type="HAMAP-Rule" id="MF_00386"/>
    </source>
</evidence>
<sequence length="85" mass="9615">MNLYESCVRGALRAYKLTLSPLIGRQCRFFPTCSEYAAEALIGHGPVRGSWLTVRRLCRCHPWGPSGWDPPPPPRRKGAKWTCET</sequence>
<name>YIDD_PHEZH</name>
<protein>
    <recommendedName>
        <fullName evidence="1">Putative membrane protein insertion efficiency factor</fullName>
    </recommendedName>
</protein>
<organism>
    <name type="scientific">Phenylobacterium zucineum (strain HLK1)</name>
    <dbReference type="NCBI Taxonomy" id="450851"/>
    <lineage>
        <taxon>Bacteria</taxon>
        <taxon>Pseudomonadati</taxon>
        <taxon>Pseudomonadota</taxon>
        <taxon>Alphaproteobacteria</taxon>
        <taxon>Caulobacterales</taxon>
        <taxon>Caulobacteraceae</taxon>
        <taxon>Phenylobacterium</taxon>
    </lineage>
</organism>
<accession>B4RE94</accession>
<gene>
    <name type="ordered locus">PHZ_c0422</name>
</gene>
<keyword id="KW-0997">Cell inner membrane</keyword>
<keyword id="KW-1003">Cell membrane</keyword>
<keyword id="KW-0472">Membrane</keyword>
<keyword id="KW-1185">Reference proteome</keyword>